<protein>
    <recommendedName>
        <fullName evidence="1">Methionine--tRNA ligase</fullName>
        <ecNumber evidence="1">6.1.1.10</ecNumber>
    </recommendedName>
    <alternativeName>
        <fullName evidence="1">Methionyl-tRNA synthetase</fullName>
        <shortName evidence="1">MetRS</shortName>
    </alternativeName>
</protein>
<dbReference type="EC" id="6.1.1.10" evidence="1"/>
<dbReference type="EMBL" id="CP000058">
    <property type="protein sequence ID" value="AAZ35421.1"/>
    <property type="molecule type" value="Genomic_DNA"/>
</dbReference>
<dbReference type="RefSeq" id="WP_011168025.1">
    <property type="nucleotide sequence ID" value="NC_005773.3"/>
</dbReference>
<dbReference type="SMR" id="Q48LT7"/>
<dbReference type="KEGG" id="psp:PSPPH_1378"/>
<dbReference type="eggNOG" id="COG0073">
    <property type="taxonomic scope" value="Bacteria"/>
</dbReference>
<dbReference type="eggNOG" id="COG0143">
    <property type="taxonomic scope" value="Bacteria"/>
</dbReference>
<dbReference type="HOGENOM" id="CLU_009710_7_0_6"/>
<dbReference type="Proteomes" id="UP000000551">
    <property type="component" value="Chromosome"/>
</dbReference>
<dbReference type="GO" id="GO:0005829">
    <property type="term" value="C:cytosol"/>
    <property type="evidence" value="ECO:0007669"/>
    <property type="project" value="TreeGrafter"/>
</dbReference>
<dbReference type="GO" id="GO:0005524">
    <property type="term" value="F:ATP binding"/>
    <property type="evidence" value="ECO:0007669"/>
    <property type="project" value="UniProtKB-UniRule"/>
</dbReference>
<dbReference type="GO" id="GO:0046872">
    <property type="term" value="F:metal ion binding"/>
    <property type="evidence" value="ECO:0007669"/>
    <property type="project" value="UniProtKB-KW"/>
</dbReference>
<dbReference type="GO" id="GO:0004825">
    <property type="term" value="F:methionine-tRNA ligase activity"/>
    <property type="evidence" value="ECO:0007669"/>
    <property type="project" value="UniProtKB-UniRule"/>
</dbReference>
<dbReference type="GO" id="GO:0000049">
    <property type="term" value="F:tRNA binding"/>
    <property type="evidence" value="ECO:0007669"/>
    <property type="project" value="UniProtKB-KW"/>
</dbReference>
<dbReference type="GO" id="GO:0006431">
    <property type="term" value="P:methionyl-tRNA aminoacylation"/>
    <property type="evidence" value="ECO:0007669"/>
    <property type="project" value="UniProtKB-UniRule"/>
</dbReference>
<dbReference type="CDD" id="cd07957">
    <property type="entry name" value="Anticodon_Ia_Met"/>
    <property type="match status" value="1"/>
</dbReference>
<dbReference type="CDD" id="cd00814">
    <property type="entry name" value="MetRS_core"/>
    <property type="match status" value="1"/>
</dbReference>
<dbReference type="CDD" id="cd02800">
    <property type="entry name" value="tRNA_bind_EcMetRS_like"/>
    <property type="match status" value="1"/>
</dbReference>
<dbReference type="FunFam" id="1.10.730.10:FF:000005">
    <property type="entry name" value="Methionine--tRNA ligase"/>
    <property type="match status" value="1"/>
</dbReference>
<dbReference type="FunFam" id="2.20.28.20:FF:000001">
    <property type="entry name" value="Methionine--tRNA ligase"/>
    <property type="match status" value="1"/>
</dbReference>
<dbReference type="FunFam" id="2.40.50.140:FF:000042">
    <property type="entry name" value="Methionine--tRNA ligase"/>
    <property type="match status" value="1"/>
</dbReference>
<dbReference type="Gene3D" id="3.40.50.620">
    <property type="entry name" value="HUPs"/>
    <property type="match status" value="1"/>
</dbReference>
<dbReference type="Gene3D" id="1.10.730.10">
    <property type="entry name" value="Isoleucyl-tRNA Synthetase, Domain 1"/>
    <property type="match status" value="1"/>
</dbReference>
<dbReference type="Gene3D" id="2.20.28.20">
    <property type="entry name" value="Methionyl-tRNA synthetase, Zn-domain"/>
    <property type="match status" value="1"/>
</dbReference>
<dbReference type="Gene3D" id="2.40.50.140">
    <property type="entry name" value="Nucleic acid-binding proteins"/>
    <property type="match status" value="1"/>
</dbReference>
<dbReference type="HAMAP" id="MF_00098">
    <property type="entry name" value="Met_tRNA_synth_type1"/>
    <property type="match status" value="1"/>
</dbReference>
<dbReference type="InterPro" id="IPR001412">
    <property type="entry name" value="aa-tRNA-synth_I_CS"/>
</dbReference>
<dbReference type="InterPro" id="IPR041872">
    <property type="entry name" value="Anticodon_Met"/>
</dbReference>
<dbReference type="InterPro" id="IPR004495">
    <property type="entry name" value="Met-tRNA-synth_bsu_C"/>
</dbReference>
<dbReference type="InterPro" id="IPR023458">
    <property type="entry name" value="Met-tRNA_ligase_1"/>
</dbReference>
<dbReference type="InterPro" id="IPR014758">
    <property type="entry name" value="Met-tRNA_synth"/>
</dbReference>
<dbReference type="InterPro" id="IPR015413">
    <property type="entry name" value="Methionyl/Leucyl_tRNA_Synth"/>
</dbReference>
<dbReference type="InterPro" id="IPR033911">
    <property type="entry name" value="MetRS_core"/>
</dbReference>
<dbReference type="InterPro" id="IPR029038">
    <property type="entry name" value="MetRS_Zn"/>
</dbReference>
<dbReference type="InterPro" id="IPR012340">
    <property type="entry name" value="NA-bd_OB-fold"/>
</dbReference>
<dbReference type="InterPro" id="IPR014729">
    <property type="entry name" value="Rossmann-like_a/b/a_fold"/>
</dbReference>
<dbReference type="InterPro" id="IPR002547">
    <property type="entry name" value="tRNA-bd_dom"/>
</dbReference>
<dbReference type="InterPro" id="IPR009080">
    <property type="entry name" value="tRNAsynth_Ia_anticodon-bd"/>
</dbReference>
<dbReference type="NCBIfam" id="TIGR00398">
    <property type="entry name" value="metG"/>
    <property type="match status" value="1"/>
</dbReference>
<dbReference type="NCBIfam" id="TIGR00399">
    <property type="entry name" value="metG_C_term"/>
    <property type="match status" value="1"/>
</dbReference>
<dbReference type="NCBIfam" id="NF001100">
    <property type="entry name" value="PRK00133.1"/>
    <property type="match status" value="1"/>
</dbReference>
<dbReference type="PANTHER" id="PTHR45765">
    <property type="entry name" value="METHIONINE--TRNA LIGASE"/>
    <property type="match status" value="1"/>
</dbReference>
<dbReference type="PANTHER" id="PTHR45765:SF1">
    <property type="entry name" value="METHIONINE--TRNA LIGASE, CYTOPLASMIC"/>
    <property type="match status" value="1"/>
</dbReference>
<dbReference type="Pfam" id="PF19303">
    <property type="entry name" value="Anticodon_3"/>
    <property type="match status" value="1"/>
</dbReference>
<dbReference type="Pfam" id="PF09334">
    <property type="entry name" value="tRNA-synt_1g"/>
    <property type="match status" value="1"/>
</dbReference>
<dbReference type="Pfam" id="PF01588">
    <property type="entry name" value="tRNA_bind"/>
    <property type="match status" value="1"/>
</dbReference>
<dbReference type="PRINTS" id="PR01041">
    <property type="entry name" value="TRNASYNTHMET"/>
</dbReference>
<dbReference type="SUPFAM" id="SSF47323">
    <property type="entry name" value="Anticodon-binding domain of a subclass of class I aminoacyl-tRNA synthetases"/>
    <property type="match status" value="1"/>
</dbReference>
<dbReference type="SUPFAM" id="SSF57770">
    <property type="entry name" value="Methionyl-tRNA synthetase (MetRS), Zn-domain"/>
    <property type="match status" value="1"/>
</dbReference>
<dbReference type="SUPFAM" id="SSF50249">
    <property type="entry name" value="Nucleic acid-binding proteins"/>
    <property type="match status" value="1"/>
</dbReference>
<dbReference type="SUPFAM" id="SSF52374">
    <property type="entry name" value="Nucleotidylyl transferase"/>
    <property type="match status" value="1"/>
</dbReference>
<dbReference type="PROSITE" id="PS00178">
    <property type="entry name" value="AA_TRNA_LIGASE_I"/>
    <property type="match status" value="1"/>
</dbReference>
<dbReference type="PROSITE" id="PS50886">
    <property type="entry name" value="TRBD"/>
    <property type="match status" value="1"/>
</dbReference>
<evidence type="ECO:0000255" key="1">
    <source>
        <dbReference type="HAMAP-Rule" id="MF_00098"/>
    </source>
</evidence>
<keyword id="KW-0030">Aminoacyl-tRNA synthetase</keyword>
<keyword id="KW-0067">ATP-binding</keyword>
<keyword id="KW-0963">Cytoplasm</keyword>
<keyword id="KW-0436">Ligase</keyword>
<keyword id="KW-0479">Metal-binding</keyword>
<keyword id="KW-0547">Nucleotide-binding</keyword>
<keyword id="KW-0648">Protein biosynthesis</keyword>
<keyword id="KW-0694">RNA-binding</keyword>
<keyword id="KW-0820">tRNA-binding</keyword>
<keyword id="KW-0862">Zinc</keyword>
<reference key="1">
    <citation type="journal article" date="2005" name="J. Bacteriol.">
        <title>Whole-genome sequence analysis of Pseudomonas syringae pv. phaseolicola 1448A reveals divergence among pathovars in genes involved in virulence and transposition.</title>
        <authorList>
            <person name="Joardar V."/>
            <person name="Lindeberg M."/>
            <person name="Jackson R.W."/>
            <person name="Selengut J."/>
            <person name="Dodson R."/>
            <person name="Brinkac L.M."/>
            <person name="Daugherty S.C."/>
            <person name="DeBoy R.T."/>
            <person name="Durkin A.S."/>
            <person name="Gwinn Giglio M."/>
            <person name="Madupu R."/>
            <person name="Nelson W.C."/>
            <person name="Rosovitz M.J."/>
            <person name="Sullivan S.A."/>
            <person name="Crabtree J."/>
            <person name="Creasy T."/>
            <person name="Davidsen T.M."/>
            <person name="Haft D.H."/>
            <person name="Zafar N."/>
            <person name="Zhou L."/>
            <person name="Halpin R."/>
            <person name="Holley T."/>
            <person name="Khouri H.M."/>
            <person name="Feldblyum T.V."/>
            <person name="White O."/>
            <person name="Fraser C.M."/>
            <person name="Chatterjee A.K."/>
            <person name="Cartinhour S."/>
            <person name="Schneider D."/>
            <person name="Mansfield J.W."/>
            <person name="Collmer A."/>
            <person name="Buell R."/>
        </authorList>
    </citation>
    <scope>NUCLEOTIDE SEQUENCE [LARGE SCALE GENOMIC DNA]</scope>
    <source>
        <strain>1448A / Race 6</strain>
    </source>
</reference>
<organism>
    <name type="scientific">Pseudomonas savastanoi pv. phaseolicola (strain 1448A / Race 6)</name>
    <name type="common">Pseudomonas syringae pv. phaseolicola (strain 1448A / Race 6)</name>
    <dbReference type="NCBI Taxonomy" id="264730"/>
    <lineage>
        <taxon>Bacteria</taxon>
        <taxon>Pseudomonadati</taxon>
        <taxon>Pseudomonadota</taxon>
        <taxon>Gammaproteobacteria</taxon>
        <taxon>Pseudomonadales</taxon>
        <taxon>Pseudomonadaceae</taxon>
        <taxon>Pseudomonas</taxon>
    </lineage>
</organism>
<feature type="chain" id="PRO_0000331876" description="Methionine--tRNA ligase">
    <location>
        <begin position="1"/>
        <end position="682"/>
    </location>
</feature>
<feature type="domain" description="tRNA-binding" evidence="1">
    <location>
        <begin position="580"/>
        <end position="682"/>
    </location>
</feature>
<feature type="short sequence motif" description="'HIGH' region">
    <location>
        <begin position="14"/>
        <end position="24"/>
    </location>
</feature>
<feature type="short sequence motif" description="'KMSKS' region">
    <location>
        <begin position="331"/>
        <end position="335"/>
    </location>
</feature>
<feature type="binding site" evidence="1">
    <location>
        <position position="145"/>
    </location>
    <ligand>
        <name>Zn(2+)</name>
        <dbReference type="ChEBI" id="CHEBI:29105"/>
    </ligand>
</feature>
<feature type="binding site" evidence="1">
    <location>
        <position position="148"/>
    </location>
    <ligand>
        <name>Zn(2+)</name>
        <dbReference type="ChEBI" id="CHEBI:29105"/>
    </ligand>
</feature>
<feature type="binding site" evidence="1">
    <location>
        <position position="158"/>
    </location>
    <ligand>
        <name>Zn(2+)</name>
        <dbReference type="ChEBI" id="CHEBI:29105"/>
    </ligand>
</feature>
<feature type="binding site" evidence="1">
    <location>
        <position position="161"/>
    </location>
    <ligand>
        <name>Zn(2+)</name>
        <dbReference type="ChEBI" id="CHEBI:29105"/>
    </ligand>
</feature>
<feature type="binding site" evidence="1">
    <location>
        <position position="334"/>
    </location>
    <ligand>
        <name>ATP</name>
        <dbReference type="ChEBI" id="CHEBI:30616"/>
    </ligand>
</feature>
<comment type="function">
    <text evidence="1">Is required not only for elongation of protein synthesis but also for the initiation of all mRNA translation through initiator tRNA(fMet) aminoacylation.</text>
</comment>
<comment type="catalytic activity">
    <reaction evidence="1">
        <text>tRNA(Met) + L-methionine + ATP = L-methionyl-tRNA(Met) + AMP + diphosphate</text>
        <dbReference type="Rhea" id="RHEA:13481"/>
        <dbReference type="Rhea" id="RHEA-COMP:9667"/>
        <dbReference type="Rhea" id="RHEA-COMP:9698"/>
        <dbReference type="ChEBI" id="CHEBI:30616"/>
        <dbReference type="ChEBI" id="CHEBI:33019"/>
        <dbReference type="ChEBI" id="CHEBI:57844"/>
        <dbReference type="ChEBI" id="CHEBI:78442"/>
        <dbReference type="ChEBI" id="CHEBI:78530"/>
        <dbReference type="ChEBI" id="CHEBI:456215"/>
        <dbReference type="EC" id="6.1.1.10"/>
    </reaction>
</comment>
<comment type="cofactor">
    <cofactor evidence="1">
        <name>Zn(2+)</name>
        <dbReference type="ChEBI" id="CHEBI:29105"/>
    </cofactor>
    <text evidence="1">Binds 1 zinc ion per subunit.</text>
</comment>
<comment type="subunit">
    <text evidence="1">Homodimer.</text>
</comment>
<comment type="subcellular location">
    <subcellularLocation>
        <location evidence="1">Cytoplasm</location>
    </subcellularLocation>
</comment>
<comment type="similarity">
    <text evidence="1">Belongs to the class-I aminoacyl-tRNA synthetase family. MetG type 1 subfamily.</text>
</comment>
<sequence>MSEPRKILVTSALPYANGSIHLGHMLEYIQTDMWVRFQKHRGNQCIYVCADDAHGSAIMLRAEKEGITPEQLIDNVKAEHSADFADFLVDFDNFHSTHSDENRELSSMIYTRLRDAGHIATRSVTQYFDPEKKMFLADRFIKGTCPKCAAEDQYGDNCEKCGATYAPTDLKNPKSAISGTTPVLKDSKHFFFDLPAFDAMLKSWTRSGTLQDAVANKIAEWLDSGLQQWDISRDAPYFGFEIPDEPGKYFYVWLDAPIGYMASFKNLCARRPDLDFDAYWGKGATTELYHFIGKDIVNFHALFWPAMLEGAGLRTPTGINVHGYLTVNGQKMSKSRGTFIKARTYLDHLPPEYLRYYYASKLGRGVDDLDLNFEDFVQKVNSDLIGKVVNIASRCAGFIHKGNAGVMGEANAAPELTDAFLAAAPSIADAYEARDFARAMRETMALADRANAYIAEKAPWALAKQEGKQDEVQAVCSLGINLFRQLVIFLKPVLPNLAADAEKFLNVEPLTWEDHKTLLGNHQLNPFSALMTRIDPLKVEAMAAASKEDLTATDATASSAPAGNGELAKDPLSAEIDFDAFAAVDLRVALILKAEHVEGADKLLRLTLDIGDEQRNVFSGIKSAYPNPSELEGRLTMMIANLKPRKMRFGISEGMVMAAGPGGEEIYLLSPDSGAKPGQRIK</sequence>
<name>SYM_PSE14</name>
<proteinExistence type="inferred from homology"/>
<gene>
    <name evidence="1" type="primary">metG</name>
    <name type="ordered locus">PSPPH_1378</name>
</gene>
<accession>Q48LT7</accession>